<accession>Q9SUP0</accession>
<accession>Q8LCV4</accession>
<feature type="initiator methionine" description="Removed" evidence="2">
    <location>
        <position position="1"/>
    </location>
</feature>
<feature type="chain" id="PRO_0000308679" description="CASP-like protein 1B2">
    <location>
        <begin position="2"/>
        <end position="197"/>
    </location>
</feature>
<feature type="topological domain" description="Cytoplasmic" evidence="3">
    <location>
        <begin position="2"/>
        <end position="17"/>
    </location>
</feature>
<feature type="transmembrane region" description="Helical" evidence="3">
    <location>
        <begin position="18"/>
        <end position="38"/>
    </location>
</feature>
<feature type="topological domain" description="Extracellular" evidence="3">
    <location>
        <begin position="39"/>
        <end position="69"/>
    </location>
</feature>
<feature type="transmembrane region" description="Helical" evidence="3">
    <location>
        <begin position="70"/>
        <end position="90"/>
    </location>
</feature>
<feature type="topological domain" description="Cytoplasmic" evidence="3">
    <location>
        <begin position="91"/>
        <end position="106"/>
    </location>
</feature>
<feature type="transmembrane region" description="Helical" evidence="3">
    <location>
        <begin position="107"/>
        <end position="127"/>
    </location>
</feature>
<feature type="topological domain" description="Extracellular" evidence="3">
    <location>
        <begin position="128"/>
        <end position="156"/>
    </location>
</feature>
<feature type="transmembrane region" description="Helical" evidence="3">
    <location>
        <begin position="157"/>
        <end position="177"/>
    </location>
</feature>
<feature type="topological domain" description="Cytoplasmic" evidence="3">
    <location>
        <begin position="178"/>
        <end position="197"/>
    </location>
</feature>
<feature type="modified residue" description="N-acetylalanine" evidence="2">
    <location>
        <position position="2"/>
    </location>
</feature>
<feature type="sequence conflict" description="In Ref. 3; AAM64457." evidence="5" ref="3">
    <original>VV</original>
    <variation>AL</variation>
    <location>
        <begin position="89"/>
        <end position="90"/>
    </location>
</feature>
<feature type="sequence conflict" description="In Ref. 3; AAM64457." evidence="5" ref="3">
    <original>R</original>
    <variation>P</variation>
    <location>
        <position position="95"/>
    </location>
</feature>
<feature type="sequence conflict" description="In Ref. 3; AAM64457." evidence="5" ref="3">
    <original>T</original>
    <variation>A</variation>
    <location>
        <position position="149"/>
    </location>
</feature>
<dbReference type="EMBL" id="AL080253">
    <property type="protein sequence ID" value="CAB45805.1"/>
    <property type="molecule type" value="Genomic_DNA"/>
</dbReference>
<dbReference type="EMBL" id="AL161553">
    <property type="protein sequence ID" value="CAB79039.1"/>
    <property type="molecule type" value="Genomic_DNA"/>
</dbReference>
<dbReference type="EMBL" id="CP002687">
    <property type="protein sequence ID" value="AEE84323.1"/>
    <property type="molecule type" value="Genomic_DNA"/>
</dbReference>
<dbReference type="EMBL" id="BT025759">
    <property type="protein sequence ID" value="ABF83649.1"/>
    <property type="molecule type" value="mRNA"/>
</dbReference>
<dbReference type="EMBL" id="AY086390">
    <property type="protein sequence ID" value="AAM64457.1"/>
    <property type="molecule type" value="mRNA"/>
</dbReference>
<dbReference type="PIR" id="T10581">
    <property type="entry name" value="T10581"/>
</dbReference>
<dbReference type="RefSeq" id="NP_193772.1">
    <property type="nucleotide sequence ID" value="NM_118158.4"/>
</dbReference>
<dbReference type="SMR" id="Q9SUP0"/>
<dbReference type="BioGRID" id="13078">
    <property type="interactions" value="28"/>
</dbReference>
<dbReference type="FunCoup" id="Q9SUP0">
    <property type="interactions" value="177"/>
</dbReference>
<dbReference type="IntAct" id="Q9SUP0">
    <property type="interactions" value="26"/>
</dbReference>
<dbReference type="STRING" id="3702.Q9SUP0"/>
<dbReference type="PaxDb" id="3702-AT4G20390.1"/>
<dbReference type="ProteomicsDB" id="222630"/>
<dbReference type="EnsemblPlants" id="AT4G20390.1">
    <property type="protein sequence ID" value="AT4G20390.1"/>
    <property type="gene ID" value="AT4G20390"/>
</dbReference>
<dbReference type="GeneID" id="827787"/>
<dbReference type="Gramene" id="AT4G20390.1">
    <property type="protein sequence ID" value="AT4G20390.1"/>
    <property type="gene ID" value="AT4G20390"/>
</dbReference>
<dbReference type="KEGG" id="ath:AT4G20390"/>
<dbReference type="Araport" id="AT4G20390"/>
<dbReference type="TAIR" id="AT4G20390">
    <property type="gene designation" value="CASPL1B2"/>
</dbReference>
<dbReference type="eggNOG" id="ENOG502RYH6">
    <property type="taxonomic scope" value="Eukaryota"/>
</dbReference>
<dbReference type="HOGENOM" id="CLU_066104_1_0_1"/>
<dbReference type="InParanoid" id="Q9SUP0"/>
<dbReference type="OMA" id="HNLVMIA"/>
<dbReference type="PhylomeDB" id="Q9SUP0"/>
<dbReference type="PRO" id="PR:Q9SUP0"/>
<dbReference type="Proteomes" id="UP000006548">
    <property type="component" value="Chromosome 4"/>
</dbReference>
<dbReference type="ExpressionAtlas" id="Q9SUP0">
    <property type="expression patterns" value="baseline and differential"/>
</dbReference>
<dbReference type="GO" id="GO:0005886">
    <property type="term" value="C:plasma membrane"/>
    <property type="evidence" value="ECO:0000314"/>
    <property type="project" value="UniProtKB"/>
</dbReference>
<dbReference type="InterPro" id="IPR006459">
    <property type="entry name" value="CASP/CASPL"/>
</dbReference>
<dbReference type="InterPro" id="IPR006702">
    <property type="entry name" value="CASP_dom"/>
</dbReference>
<dbReference type="InterPro" id="IPR044173">
    <property type="entry name" value="CASPL"/>
</dbReference>
<dbReference type="NCBIfam" id="TIGR01569">
    <property type="entry name" value="A_tha_TIGR01569"/>
    <property type="match status" value="1"/>
</dbReference>
<dbReference type="PANTHER" id="PTHR36488">
    <property type="entry name" value="CASP-LIKE PROTEIN 1U1"/>
    <property type="match status" value="1"/>
</dbReference>
<dbReference type="PANTHER" id="PTHR36488:SF8">
    <property type="entry name" value="CASP-LIKE PROTEIN 1U1"/>
    <property type="match status" value="1"/>
</dbReference>
<dbReference type="Pfam" id="PF04535">
    <property type="entry name" value="CASP_dom"/>
    <property type="match status" value="1"/>
</dbReference>
<keyword id="KW-0007">Acetylation</keyword>
<keyword id="KW-1003">Cell membrane</keyword>
<keyword id="KW-0472">Membrane</keyword>
<keyword id="KW-1185">Reference proteome</keyword>
<keyword id="KW-0812">Transmembrane</keyword>
<keyword id="KW-1133">Transmembrane helix</keyword>
<organism>
    <name type="scientific">Arabidopsis thaliana</name>
    <name type="common">Mouse-ear cress</name>
    <dbReference type="NCBI Taxonomy" id="3702"/>
    <lineage>
        <taxon>Eukaryota</taxon>
        <taxon>Viridiplantae</taxon>
        <taxon>Streptophyta</taxon>
        <taxon>Embryophyta</taxon>
        <taxon>Tracheophyta</taxon>
        <taxon>Spermatophyta</taxon>
        <taxon>Magnoliopsida</taxon>
        <taxon>eudicotyledons</taxon>
        <taxon>Gunneridae</taxon>
        <taxon>Pentapetalae</taxon>
        <taxon>rosids</taxon>
        <taxon>malvids</taxon>
        <taxon>Brassicales</taxon>
        <taxon>Brassicaceae</taxon>
        <taxon>Camelineae</taxon>
        <taxon>Arabidopsis</taxon>
    </lineage>
</organism>
<gene>
    <name type="ordered locus">At4g20390</name>
    <name type="ORF">F9F13.40</name>
</gene>
<sequence>MAREKIVVAGGTTKSWKLLLGLRIFAFMATLAAAIVMSLNKETKTLVVATIGTVPIKATLTAKFQHTPAFVFFVIANVMVSFHNLLMIVVQIFSRKLEYKGLRLLSIAILDMLNATLVSAAANAAVFVAELGKNGNKHAKWNKVCDRFTTYCDHGAGAIIAAFAGVILMLLVSAVSISRLLINSKNFSTTATTTSVV</sequence>
<evidence type="ECO:0000250" key="1"/>
<evidence type="ECO:0000250" key="2">
    <source>
        <dbReference type="UniProtKB" id="Q9SQU2"/>
    </source>
</evidence>
<evidence type="ECO:0000255" key="3"/>
<evidence type="ECO:0000269" key="4">
    <source>
    </source>
</evidence>
<evidence type="ECO:0000305" key="5"/>
<name>CSPLQ_ARATH</name>
<proteinExistence type="evidence at transcript level"/>
<comment type="subunit">
    <text evidence="1">Homodimer and heterodimers.</text>
</comment>
<comment type="subcellular location">
    <subcellularLocation>
        <location evidence="4">Cell membrane</location>
        <topology evidence="4">Multi-pass membrane protein</topology>
    </subcellularLocation>
</comment>
<comment type="similarity">
    <text evidence="5">Belongs to the Casparian strip membrane proteins (CASP) family.</text>
</comment>
<protein>
    <recommendedName>
        <fullName>CASP-like protein 1B2</fullName>
        <shortName>AtCASPL1B2</shortName>
    </recommendedName>
</protein>
<reference key="1">
    <citation type="journal article" date="1999" name="Nature">
        <title>Sequence and analysis of chromosome 4 of the plant Arabidopsis thaliana.</title>
        <authorList>
            <person name="Mayer K.F.X."/>
            <person name="Schueller C."/>
            <person name="Wambutt R."/>
            <person name="Murphy G."/>
            <person name="Volckaert G."/>
            <person name="Pohl T."/>
            <person name="Duesterhoeft A."/>
            <person name="Stiekema W."/>
            <person name="Entian K.-D."/>
            <person name="Terryn N."/>
            <person name="Harris B."/>
            <person name="Ansorge W."/>
            <person name="Brandt P."/>
            <person name="Grivell L.A."/>
            <person name="Rieger M."/>
            <person name="Weichselgartner M."/>
            <person name="de Simone V."/>
            <person name="Obermaier B."/>
            <person name="Mache R."/>
            <person name="Mueller M."/>
            <person name="Kreis M."/>
            <person name="Delseny M."/>
            <person name="Puigdomenech P."/>
            <person name="Watson M."/>
            <person name="Schmidtheini T."/>
            <person name="Reichert B."/>
            <person name="Portetelle D."/>
            <person name="Perez-Alonso M."/>
            <person name="Boutry M."/>
            <person name="Bancroft I."/>
            <person name="Vos P."/>
            <person name="Hoheisel J."/>
            <person name="Zimmermann W."/>
            <person name="Wedler H."/>
            <person name="Ridley P."/>
            <person name="Langham S.-A."/>
            <person name="McCullagh B."/>
            <person name="Bilham L."/>
            <person name="Robben J."/>
            <person name="van der Schueren J."/>
            <person name="Grymonprez B."/>
            <person name="Chuang Y.-J."/>
            <person name="Vandenbussche F."/>
            <person name="Braeken M."/>
            <person name="Weltjens I."/>
            <person name="Voet M."/>
            <person name="Bastiaens I."/>
            <person name="Aert R."/>
            <person name="Defoor E."/>
            <person name="Weitzenegger T."/>
            <person name="Bothe G."/>
            <person name="Ramsperger U."/>
            <person name="Hilbert H."/>
            <person name="Braun M."/>
            <person name="Holzer E."/>
            <person name="Brandt A."/>
            <person name="Peters S."/>
            <person name="van Staveren M."/>
            <person name="Dirkse W."/>
            <person name="Mooijman P."/>
            <person name="Klein Lankhorst R."/>
            <person name="Rose M."/>
            <person name="Hauf J."/>
            <person name="Koetter P."/>
            <person name="Berneiser S."/>
            <person name="Hempel S."/>
            <person name="Feldpausch M."/>
            <person name="Lamberth S."/>
            <person name="Van den Daele H."/>
            <person name="De Keyser A."/>
            <person name="Buysshaert C."/>
            <person name="Gielen J."/>
            <person name="Villarroel R."/>
            <person name="De Clercq R."/>
            <person name="van Montagu M."/>
            <person name="Rogers J."/>
            <person name="Cronin A."/>
            <person name="Quail M.A."/>
            <person name="Bray-Allen S."/>
            <person name="Clark L."/>
            <person name="Doggett J."/>
            <person name="Hall S."/>
            <person name="Kay M."/>
            <person name="Lennard N."/>
            <person name="McLay K."/>
            <person name="Mayes R."/>
            <person name="Pettett A."/>
            <person name="Rajandream M.A."/>
            <person name="Lyne M."/>
            <person name="Benes V."/>
            <person name="Rechmann S."/>
            <person name="Borkova D."/>
            <person name="Bloecker H."/>
            <person name="Scharfe M."/>
            <person name="Grimm M."/>
            <person name="Loehnert T.-H."/>
            <person name="Dose S."/>
            <person name="de Haan M."/>
            <person name="Maarse A.C."/>
            <person name="Schaefer M."/>
            <person name="Mueller-Auer S."/>
            <person name="Gabel C."/>
            <person name="Fuchs M."/>
            <person name="Fartmann B."/>
            <person name="Granderath K."/>
            <person name="Dauner D."/>
            <person name="Herzl A."/>
            <person name="Neumann S."/>
            <person name="Argiriou A."/>
            <person name="Vitale D."/>
            <person name="Liguori R."/>
            <person name="Piravandi E."/>
            <person name="Massenet O."/>
            <person name="Quigley F."/>
            <person name="Clabauld G."/>
            <person name="Muendlein A."/>
            <person name="Felber R."/>
            <person name="Schnabl S."/>
            <person name="Hiller R."/>
            <person name="Schmidt W."/>
            <person name="Lecharny A."/>
            <person name="Aubourg S."/>
            <person name="Chefdor F."/>
            <person name="Cooke R."/>
            <person name="Berger C."/>
            <person name="Monfort A."/>
            <person name="Casacuberta E."/>
            <person name="Gibbons T."/>
            <person name="Weber N."/>
            <person name="Vandenbol M."/>
            <person name="Bargues M."/>
            <person name="Terol J."/>
            <person name="Torres A."/>
            <person name="Perez-Perez A."/>
            <person name="Purnelle B."/>
            <person name="Bent E."/>
            <person name="Johnson S."/>
            <person name="Tacon D."/>
            <person name="Jesse T."/>
            <person name="Heijnen L."/>
            <person name="Schwarz S."/>
            <person name="Scholler P."/>
            <person name="Heber S."/>
            <person name="Francs P."/>
            <person name="Bielke C."/>
            <person name="Frishman D."/>
            <person name="Haase D."/>
            <person name="Lemcke K."/>
            <person name="Mewes H.-W."/>
            <person name="Stocker S."/>
            <person name="Zaccaria P."/>
            <person name="Bevan M."/>
            <person name="Wilson R.K."/>
            <person name="de la Bastide M."/>
            <person name="Habermann K."/>
            <person name="Parnell L."/>
            <person name="Dedhia N."/>
            <person name="Gnoj L."/>
            <person name="Schutz K."/>
            <person name="Huang E."/>
            <person name="Spiegel L."/>
            <person name="Sekhon M."/>
            <person name="Murray J."/>
            <person name="Sheet P."/>
            <person name="Cordes M."/>
            <person name="Abu-Threideh J."/>
            <person name="Stoneking T."/>
            <person name="Kalicki J."/>
            <person name="Graves T."/>
            <person name="Harmon G."/>
            <person name="Edwards J."/>
            <person name="Latreille P."/>
            <person name="Courtney L."/>
            <person name="Cloud J."/>
            <person name="Abbott A."/>
            <person name="Scott K."/>
            <person name="Johnson D."/>
            <person name="Minx P."/>
            <person name="Bentley D."/>
            <person name="Fulton B."/>
            <person name="Miller N."/>
            <person name="Greco T."/>
            <person name="Kemp K."/>
            <person name="Kramer J."/>
            <person name="Fulton L."/>
            <person name="Mardis E."/>
            <person name="Dante M."/>
            <person name="Pepin K."/>
            <person name="Hillier L.W."/>
            <person name="Nelson J."/>
            <person name="Spieth J."/>
            <person name="Ryan E."/>
            <person name="Andrews S."/>
            <person name="Geisel C."/>
            <person name="Layman D."/>
            <person name="Du H."/>
            <person name="Ali J."/>
            <person name="Berghoff A."/>
            <person name="Jones K."/>
            <person name="Drone K."/>
            <person name="Cotton M."/>
            <person name="Joshu C."/>
            <person name="Antonoiu B."/>
            <person name="Zidanic M."/>
            <person name="Strong C."/>
            <person name="Sun H."/>
            <person name="Lamar B."/>
            <person name="Yordan C."/>
            <person name="Ma P."/>
            <person name="Zhong J."/>
            <person name="Preston R."/>
            <person name="Vil D."/>
            <person name="Shekher M."/>
            <person name="Matero A."/>
            <person name="Shah R."/>
            <person name="Swaby I.K."/>
            <person name="O'Shaughnessy A."/>
            <person name="Rodriguez M."/>
            <person name="Hoffman J."/>
            <person name="Till S."/>
            <person name="Granat S."/>
            <person name="Shohdy N."/>
            <person name="Hasegawa A."/>
            <person name="Hameed A."/>
            <person name="Lodhi M."/>
            <person name="Johnson A."/>
            <person name="Chen E."/>
            <person name="Marra M.A."/>
            <person name="Martienssen R."/>
            <person name="McCombie W.R."/>
        </authorList>
    </citation>
    <scope>NUCLEOTIDE SEQUENCE [LARGE SCALE GENOMIC DNA]</scope>
    <source>
        <strain>cv. Columbia</strain>
    </source>
</reference>
<reference key="2">
    <citation type="journal article" date="2017" name="Plant J.">
        <title>Araport11: a complete reannotation of the Arabidopsis thaliana reference genome.</title>
        <authorList>
            <person name="Cheng C.Y."/>
            <person name="Krishnakumar V."/>
            <person name="Chan A.P."/>
            <person name="Thibaud-Nissen F."/>
            <person name="Schobel S."/>
            <person name="Town C.D."/>
        </authorList>
    </citation>
    <scope>GENOME REANNOTATION</scope>
    <source>
        <strain>cv. Columbia</strain>
    </source>
</reference>
<reference key="3">
    <citation type="submission" date="2006-06" db="EMBL/GenBank/DDBJ databases">
        <title>Arabidopsis ORF clones.</title>
        <authorList>
            <person name="Kim C.J."/>
            <person name="Chen H."/>
            <person name="Quinitio C."/>
            <person name="Shinn P."/>
            <person name="Ecker J.R."/>
        </authorList>
    </citation>
    <scope>NUCLEOTIDE SEQUENCE [LARGE SCALE MRNA]</scope>
    <source>
        <strain>cv. Columbia</strain>
    </source>
</reference>
<reference key="4">
    <citation type="submission" date="2002-03" db="EMBL/GenBank/DDBJ databases">
        <title>Full-length cDNA from Arabidopsis thaliana.</title>
        <authorList>
            <person name="Brover V.V."/>
            <person name="Troukhan M.E."/>
            <person name="Alexandrov N.A."/>
            <person name="Lu Y.-P."/>
            <person name="Flavell R.B."/>
            <person name="Feldmann K.A."/>
        </authorList>
    </citation>
    <scope>NUCLEOTIDE SEQUENCE [LARGE SCALE MRNA]</scope>
</reference>
<reference key="5">
    <citation type="journal article" date="2014" name="Plant Physiol.">
        <title>Functional and evolutionary analysis of the CASPARIAN STRIP MEMBRANE DOMAIN PROTEIN family.</title>
        <authorList>
            <person name="Roppolo D."/>
            <person name="Boeckmann B."/>
            <person name="Pfister A."/>
            <person name="Boutet E."/>
            <person name="Rubio M.C."/>
            <person name="Denervaud-Tendon V."/>
            <person name="Vermeer J.E."/>
            <person name="Gheyselinck J."/>
            <person name="Xenarios I."/>
            <person name="Geldner N."/>
        </authorList>
    </citation>
    <scope>SUBCELLULAR LOCATION</scope>
    <scope>GENE FAMILY</scope>
    <scope>NOMENCLATURE</scope>
</reference>